<keyword id="KW-0963">Cytoplasm</keyword>
<keyword id="KW-0489">Methyltransferase</keyword>
<keyword id="KW-0698">rRNA processing</keyword>
<keyword id="KW-0949">S-adenosyl-L-methionine</keyword>
<keyword id="KW-0808">Transferase</keyword>
<feature type="chain" id="PRO_0000386731" description="Ribosomal RNA small subunit methyltransferase H">
    <location>
        <begin position="1"/>
        <end position="310"/>
    </location>
</feature>
<feature type="binding site" evidence="1">
    <location>
        <begin position="32"/>
        <end position="34"/>
    </location>
    <ligand>
        <name>S-adenosyl-L-methionine</name>
        <dbReference type="ChEBI" id="CHEBI:59789"/>
    </ligand>
</feature>
<feature type="binding site" evidence="1">
    <location>
        <position position="52"/>
    </location>
    <ligand>
        <name>S-adenosyl-L-methionine</name>
        <dbReference type="ChEBI" id="CHEBI:59789"/>
    </ligand>
</feature>
<feature type="binding site" evidence="1">
    <location>
        <position position="79"/>
    </location>
    <ligand>
        <name>S-adenosyl-L-methionine</name>
        <dbReference type="ChEBI" id="CHEBI:59789"/>
    </ligand>
</feature>
<feature type="binding site" evidence="1">
    <location>
        <position position="100"/>
    </location>
    <ligand>
        <name>S-adenosyl-L-methionine</name>
        <dbReference type="ChEBI" id="CHEBI:59789"/>
    </ligand>
</feature>
<feature type="binding site" evidence="1">
    <location>
        <position position="107"/>
    </location>
    <ligand>
        <name>S-adenosyl-L-methionine</name>
        <dbReference type="ChEBI" id="CHEBI:59789"/>
    </ligand>
</feature>
<sequence length="310" mass="34928">MFKHVTVLLKETVDGLNIKPDGTYVDCTLGGGGHSSYLLSQLTEGGKLIAFDQDEIAIQNAKEKFSSYGEQFITVKSNFRYLAEKLQEIGITEVDGILFDLGVSSPQLDTPERGFSYHHDAPLDMRMDQDAPLTAYDVVNSWSYEQLVRIFFQYGEEKFSKQIARKIEAYRENKAIETTGELVELIKEGIPAPARRTGGHPAKRVFQAIRIAVNDELKVFEEALESAIEMVKPGGRVSVITFHSLEDRICKTTFKRNSTTPQLPPGLPIIPDEFKPKLKLITRKPILPSDIELEENNRARSAKLRIAEKR</sequence>
<name>RSMH_BACC4</name>
<organism>
    <name type="scientific">Bacillus cereus (strain B4264)</name>
    <dbReference type="NCBI Taxonomy" id="405532"/>
    <lineage>
        <taxon>Bacteria</taxon>
        <taxon>Bacillati</taxon>
        <taxon>Bacillota</taxon>
        <taxon>Bacilli</taxon>
        <taxon>Bacillales</taxon>
        <taxon>Bacillaceae</taxon>
        <taxon>Bacillus</taxon>
        <taxon>Bacillus cereus group</taxon>
    </lineage>
</organism>
<gene>
    <name evidence="1" type="primary">rsmH</name>
    <name type="synonym">mraW</name>
    <name type="ordered locus">BCB4264_A4019</name>
</gene>
<proteinExistence type="inferred from homology"/>
<accession>B7H6Q4</accession>
<reference key="1">
    <citation type="submission" date="2008-10" db="EMBL/GenBank/DDBJ databases">
        <title>Genome sequence of Bacillus cereus B4264.</title>
        <authorList>
            <person name="Dodson R.J."/>
            <person name="Durkin A.S."/>
            <person name="Rosovitz M.J."/>
            <person name="Rasko D.A."/>
            <person name="Hoffmaster A."/>
            <person name="Ravel J."/>
            <person name="Sutton G."/>
        </authorList>
    </citation>
    <scope>NUCLEOTIDE SEQUENCE [LARGE SCALE GENOMIC DNA]</scope>
    <source>
        <strain>B4264</strain>
    </source>
</reference>
<comment type="function">
    <text evidence="1">Specifically methylates the N4 position of cytidine in position 1402 (C1402) of 16S rRNA.</text>
</comment>
<comment type="catalytic activity">
    <reaction evidence="1">
        <text>cytidine(1402) in 16S rRNA + S-adenosyl-L-methionine = N(4)-methylcytidine(1402) in 16S rRNA + S-adenosyl-L-homocysteine + H(+)</text>
        <dbReference type="Rhea" id="RHEA:42928"/>
        <dbReference type="Rhea" id="RHEA-COMP:10286"/>
        <dbReference type="Rhea" id="RHEA-COMP:10287"/>
        <dbReference type="ChEBI" id="CHEBI:15378"/>
        <dbReference type="ChEBI" id="CHEBI:57856"/>
        <dbReference type="ChEBI" id="CHEBI:59789"/>
        <dbReference type="ChEBI" id="CHEBI:74506"/>
        <dbReference type="ChEBI" id="CHEBI:82748"/>
        <dbReference type="EC" id="2.1.1.199"/>
    </reaction>
</comment>
<comment type="subcellular location">
    <subcellularLocation>
        <location evidence="1">Cytoplasm</location>
    </subcellularLocation>
</comment>
<comment type="similarity">
    <text evidence="1">Belongs to the methyltransferase superfamily. RsmH family.</text>
</comment>
<evidence type="ECO:0000255" key="1">
    <source>
        <dbReference type="HAMAP-Rule" id="MF_01007"/>
    </source>
</evidence>
<protein>
    <recommendedName>
        <fullName evidence="1">Ribosomal RNA small subunit methyltransferase H</fullName>
        <ecNumber evidence="1">2.1.1.199</ecNumber>
    </recommendedName>
    <alternativeName>
        <fullName evidence="1">16S rRNA m(4)C1402 methyltransferase</fullName>
    </alternativeName>
    <alternativeName>
        <fullName evidence="1">rRNA (cytosine-N(4)-)-methyltransferase RsmH</fullName>
    </alternativeName>
</protein>
<dbReference type="EC" id="2.1.1.199" evidence="1"/>
<dbReference type="EMBL" id="CP001176">
    <property type="protein sequence ID" value="ACK62984.1"/>
    <property type="molecule type" value="Genomic_DNA"/>
</dbReference>
<dbReference type="RefSeq" id="WP_000472514.1">
    <property type="nucleotide sequence ID" value="NC_011725.1"/>
</dbReference>
<dbReference type="SMR" id="B7H6Q4"/>
<dbReference type="KEGG" id="bcb:BCB4264_A4019"/>
<dbReference type="HOGENOM" id="CLU_038422_2_0_9"/>
<dbReference type="Proteomes" id="UP000007096">
    <property type="component" value="Chromosome"/>
</dbReference>
<dbReference type="GO" id="GO:0005737">
    <property type="term" value="C:cytoplasm"/>
    <property type="evidence" value="ECO:0007669"/>
    <property type="project" value="UniProtKB-SubCell"/>
</dbReference>
<dbReference type="GO" id="GO:0071424">
    <property type="term" value="F:rRNA (cytosine-N4-)-methyltransferase activity"/>
    <property type="evidence" value="ECO:0007669"/>
    <property type="project" value="UniProtKB-UniRule"/>
</dbReference>
<dbReference type="GO" id="GO:0070475">
    <property type="term" value="P:rRNA base methylation"/>
    <property type="evidence" value="ECO:0007669"/>
    <property type="project" value="UniProtKB-UniRule"/>
</dbReference>
<dbReference type="FunFam" id="1.10.150.170:FF:000001">
    <property type="entry name" value="Ribosomal RNA small subunit methyltransferase H"/>
    <property type="match status" value="1"/>
</dbReference>
<dbReference type="Gene3D" id="1.10.150.170">
    <property type="entry name" value="Putative methyltransferase TM0872, insert domain"/>
    <property type="match status" value="1"/>
</dbReference>
<dbReference type="Gene3D" id="3.40.50.150">
    <property type="entry name" value="Vaccinia Virus protein VP39"/>
    <property type="match status" value="1"/>
</dbReference>
<dbReference type="HAMAP" id="MF_01007">
    <property type="entry name" value="16SrRNA_methyltr_H"/>
    <property type="match status" value="1"/>
</dbReference>
<dbReference type="InterPro" id="IPR002903">
    <property type="entry name" value="RsmH"/>
</dbReference>
<dbReference type="InterPro" id="IPR023397">
    <property type="entry name" value="SAM-dep_MeTrfase_MraW_recog"/>
</dbReference>
<dbReference type="InterPro" id="IPR029063">
    <property type="entry name" value="SAM-dependent_MTases_sf"/>
</dbReference>
<dbReference type="NCBIfam" id="TIGR00006">
    <property type="entry name" value="16S rRNA (cytosine(1402)-N(4))-methyltransferase RsmH"/>
    <property type="match status" value="1"/>
</dbReference>
<dbReference type="PANTHER" id="PTHR11265:SF0">
    <property type="entry name" value="12S RRNA N4-METHYLCYTIDINE METHYLTRANSFERASE"/>
    <property type="match status" value="1"/>
</dbReference>
<dbReference type="PANTHER" id="PTHR11265">
    <property type="entry name" value="S-ADENOSYL-METHYLTRANSFERASE MRAW"/>
    <property type="match status" value="1"/>
</dbReference>
<dbReference type="Pfam" id="PF01795">
    <property type="entry name" value="Methyltransf_5"/>
    <property type="match status" value="1"/>
</dbReference>
<dbReference type="PIRSF" id="PIRSF004486">
    <property type="entry name" value="MraW"/>
    <property type="match status" value="1"/>
</dbReference>
<dbReference type="SUPFAM" id="SSF81799">
    <property type="entry name" value="Putative methyltransferase TM0872, insert domain"/>
    <property type="match status" value="1"/>
</dbReference>
<dbReference type="SUPFAM" id="SSF53335">
    <property type="entry name" value="S-adenosyl-L-methionine-dependent methyltransferases"/>
    <property type="match status" value="1"/>
</dbReference>